<gene>
    <name evidence="1" type="primary">tdh</name>
    <name type="ordered locus">COXBURSA331_A0201</name>
</gene>
<dbReference type="EC" id="1.1.1.103" evidence="1"/>
<dbReference type="EMBL" id="CP000890">
    <property type="protein sequence ID" value="ABX77947.1"/>
    <property type="molecule type" value="Genomic_DNA"/>
</dbReference>
<dbReference type="RefSeq" id="WP_005769439.1">
    <property type="nucleotide sequence ID" value="NC_010117.1"/>
</dbReference>
<dbReference type="SMR" id="A9NA21"/>
<dbReference type="KEGG" id="cbs:COXBURSA331_A0201"/>
<dbReference type="HOGENOM" id="CLU_026673_11_0_6"/>
<dbReference type="UniPathway" id="UPA00046">
    <property type="reaction ID" value="UER00505"/>
</dbReference>
<dbReference type="GO" id="GO:0005737">
    <property type="term" value="C:cytoplasm"/>
    <property type="evidence" value="ECO:0007669"/>
    <property type="project" value="UniProtKB-SubCell"/>
</dbReference>
<dbReference type="GO" id="GO:0008743">
    <property type="term" value="F:L-threonine 3-dehydrogenase activity"/>
    <property type="evidence" value="ECO:0007669"/>
    <property type="project" value="UniProtKB-UniRule"/>
</dbReference>
<dbReference type="GO" id="GO:0008270">
    <property type="term" value="F:zinc ion binding"/>
    <property type="evidence" value="ECO:0007669"/>
    <property type="project" value="UniProtKB-UniRule"/>
</dbReference>
<dbReference type="GO" id="GO:0019518">
    <property type="term" value="P:L-threonine catabolic process to glycine"/>
    <property type="evidence" value="ECO:0007669"/>
    <property type="project" value="UniProtKB-UniPathway"/>
</dbReference>
<dbReference type="Gene3D" id="3.90.180.10">
    <property type="entry name" value="Medium-chain alcohol dehydrogenases, catalytic domain"/>
    <property type="match status" value="1"/>
</dbReference>
<dbReference type="Gene3D" id="3.40.50.720">
    <property type="entry name" value="NAD(P)-binding Rossmann-like Domain"/>
    <property type="match status" value="1"/>
</dbReference>
<dbReference type="HAMAP" id="MF_00627">
    <property type="entry name" value="Thr_dehydrog"/>
    <property type="match status" value="1"/>
</dbReference>
<dbReference type="InterPro" id="IPR013149">
    <property type="entry name" value="ADH-like_C"/>
</dbReference>
<dbReference type="InterPro" id="IPR013154">
    <property type="entry name" value="ADH-like_N"/>
</dbReference>
<dbReference type="InterPro" id="IPR002328">
    <property type="entry name" value="ADH_Zn_CS"/>
</dbReference>
<dbReference type="InterPro" id="IPR011032">
    <property type="entry name" value="GroES-like_sf"/>
</dbReference>
<dbReference type="InterPro" id="IPR004627">
    <property type="entry name" value="L-Threonine_3-DHase"/>
</dbReference>
<dbReference type="InterPro" id="IPR036291">
    <property type="entry name" value="NAD(P)-bd_dom_sf"/>
</dbReference>
<dbReference type="InterPro" id="IPR020843">
    <property type="entry name" value="PKS_ER"/>
</dbReference>
<dbReference type="InterPro" id="IPR050129">
    <property type="entry name" value="Zn_alcohol_dh"/>
</dbReference>
<dbReference type="NCBIfam" id="NF003808">
    <property type="entry name" value="PRK05396.1"/>
    <property type="match status" value="1"/>
</dbReference>
<dbReference type="NCBIfam" id="TIGR00692">
    <property type="entry name" value="tdh"/>
    <property type="match status" value="1"/>
</dbReference>
<dbReference type="PANTHER" id="PTHR43401">
    <property type="entry name" value="L-THREONINE 3-DEHYDROGENASE"/>
    <property type="match status" value="1"/>
</dbReference>
<dbReference type="PANTHER" id="PTHR43401:SF2">
    <property type="entry name" value="L-THREONINE 3-DEHYDROGENASE"/>
    <property type="match status" value="1"/>
</dbReference>
<dbReference type="Pfam" id="PF08240">
    <property type="entry name" value="ADH_N"/>
    <property type="match status" value="1"/>
</dbReference>
<dbReference type="Pfam" id="PF00107">
    <property type="entry name" value="ADH_zinc_N"/>
    <property type="match status" value="1"/>
</dbReference>
<dbReference type="SMART" id="SM00829">
    <property type="entry name" value="PKS_ER"/>
    <property type="match status" value="1"/>
</dbReference>
<dbReference type="SUPFAM" id="SSF50129">
    <property type="entry name" value="GroES-like"/>
    <property type="match status" value="1"/>
</dbReference>
<dbReference type="SUPFAM" id="SSF51735">
    <property type="entry name" value="NAD(P)-binding Rossmann-fold domains"/>
    <property type="match status" value="1"/>
</dbReference>
<dbReference type="PROSITE" id="PS00059">
    <property type="entry name" value="ADH_ZINC"/>
    <property type="match status" value="1"/>
</dbReference>
<keyword id="KW-0963">Cytoplasm</keyword>
<keyword id="KW-0479">Metal-binding</keyword>
<keyword id="KW-0520">NAD</keyword>
<keyword id="KW-0560">Oxidoreductase</keyword>
<keyword id="KW-0862">Zinc</keyword>
<sequence>MKVLSKLKPAPGLWLHKAPTPKPGRDEVLIKIKKTAICGTDLHIYKWDEWAQKTIPVPMHVGHEFVGEIVEVGEAASALAVGDRVSGEGHITCGDCRNCRAGKRHLCRYTVGVGVNRPGAFAEYLVIPAKNAYKIPAKISDDIAAILDPFGNAAHSALEFDLVGEDVLITGAGPVGLMSAAIARHVGARHVVITDVNDYRLALAEKVGVTAAVNSTKTPLTETMKNLGMTEGFDVGLEMSGNAEAFRSMLTVMNNGGKIAFLGIPPEPFAIDWNQVVFKSLLIKGIYGRRMFETWYKMTNLLLSGLDISPIITHEFPMKDFQQAFDVMLSGKTGKVILNWEQ</sequence>
<protein>
    <recommendedName>
        <fullName evidence="1">L-threonine 3-dehydrogenase</fullName>
        <shortName evidence="1">TDH</shortName>
        <ecNumber evidence="1">1.1.1.103</ecNumber>
    </recommendedName>
</protein>
<proteinExistence type="inferred from homology"/>
<reference key="1">
    <citation type="submission" date="2007-11" db="EMBL/GenBank/DDBJ databases">
        <title>Genome sequencing of phylogenetically and phenotypically diverse Coxiella burnetii isolates.</title>
        <authorList>
            <person name="Seshadri R."/>
            <person name="Samuel J.E."/>
        </authorList>
    </citation>
    <scope>NUCLEOTIDE SEQUENCE [LARGE SCALE GENOMIC DNA]</scope>
    <source>
        <strain>RSA 331 / Henzerling II</strain>
    </source>
</reference>
<name>TDH_COXBR</name>
<evidence type="ECO:0000255" key="1">
    <source>
        <dbReference type="HAMAP-Rule" id="MF_00627"/>
    </source>
</evidence>
<comment type="function">
    <text evidence="1">Catalyzes the NAD(+)-dependent oxidation of L-threonine to 2-amino-3-ketobutyrate.</text>
</comment>
<comment type="catalytic activity">
    <reaction evidence="1">
        <text>L-threonine + NAD(+) = (2S)-2-amino-3-oxobutanoate + NADH + H(+)</text>
        <dbReference type="Rhea" id="RHEA:13161"/>
        <dbReference type="ChEBI" id="CHEBI:15378"/>
        <dbReference type="ChEBI" id="CHEBI:57540"/>
        <dbReference type="ChEBI" id="CHEBI:57926"/>
        <dbReference type="ChEBI" id="CHEBI:57945"/>
        <dbReference type="ChEBI" id="CHEBI:78948"/>
        <dbReference type="EC" id="1.1.1.103"/>
    </reaction>
</comment>
<comment type="cofactor">
    <cofactor evidence="1">
        <name>Zn(2+)</name>
        <dbReference type="ChEBI" id="CHEBI:29105"/>
    </cofactor>
    <text evidence="1">Binds 2 Zn(2+) ions per subunit.</text>
</comment>
<comment type="pathway">
    <text evidence="1">Amino-acid degradation; L-threonine degradation via oxydo-reductase pathway; glycine from L-threonine: step 1/2.</text>
</comment>
<comment type="subunit">
    <text evidence="1">Homotetramer.</text>
</comment>
<comment type="subcellular location">
    <subcellularLocation>
        <location evidence="1">Cytoplasm</location>
    </subcellularLocation>
</comment>
<comment type="similarity">
    <text evidence="1">Belongs to the zinc-containing alcohol dehydrogenase family.</text>
</comment>
<organism>
    <name type="scientific">Coxiella burnetii (strain RSA 331 / Henzerling II)</name>
    <dbReference type="NCBI Taxonomy" id="360115"/>
    <lineage>
        <taxon>Bacteria</taxon>
        <taxon>Pseudomonadati</taxon>
        <taxon>Pseudomonadota</taxon>
        <taxon>Gammaproteobacteria</taxon>
        <taxon>Legionellales</taxon>
        <taxon>Coxiellaceae</taxon>
        <taxon>Coxiella</taxon>
    </lineage>
</organism>
<feature type="chain" id="PRO_1000082609" description="L-threonine 3-dehydrogenase">
    <location>
        <begin position="1"/>
        <end position="342"/>
    </location>
</feature>
<feature type="active site" description="Charge relay system" evidence="1">
    <location>
        <position position="40"/>
    </location>
</feature>
<feature type="active site" description="Charge relay system" evidence="1">
    <location>
        <position position="43"/>
    </location>
</feature>
<feature type="binding site" evidence="1">
    <location>
        <position position="38"/>
    </location>
    <ligand>
        <name>Zn(2+)</name>
        <dbReference type="ChEBI" id="CHEBI:29105"/>
        <label>1</label>
        <note>catalytic</note>
    </ligand>
</feature>
<feature type="binding site" evidence="1">
    <location>
        <position position="63"/>
    </location>
    <ligand>
        <name>Zn(2+)</name>
        <dbReference type="ChEBI" id="CHEBI:29105"/>
        <label>1</label>
        <note>catalytic</note>
    </ligand>
</feature>
<feature type="binding site" evidence="1">
    <location>
        <position position="64"/>
    </location>
    <ligand>
        <name>Zn(2+)</name>
        <dbReference type="ChEBI" id="CHEBI:29105"/>
        <label>1</label>
        <note>catalytic</note>
    </ligand>
</feature>
<feature type="binding site" evidence="1">
    <location>
        <position position="93"/>
    </location>
    <ligand>
        <name>Zn(2+)</name>
        <dbReference type="ChEBI" id="CHEBI:29105"/>
        <label>2</label>
    </ligand>
</feature>
<feature type="binding site" evidence="1">
    <location>
        <position position="96"/>
    </location>
    <ligand>
        <name>Zn(2+)</name>
        <dbReference type="ChEBI" id="CHEBI:29105"/>
        <label>2</label>
    </ligand>
</feature>
<feature type="binding site" evidence="1">
    <location>
        <position position="99"/>
    </location>
    <ligand>
        <name>Zn(2+)</name>
        <dbReference type="ChEBI" id="CHEBI:29105"/>
        <label>2</label>
    </ligand>
</feature>
<feature type="binding site" evidence="1">
    <location>
        <position position="107"/>
    </location>
    <ligand>
        <name>Zn(2+)</name>
        <dbReference type="ChEBI" id="CHEBI:29105"/>
        <label>2</label>
    </ligand>
</feature>
<feature type="binding site" evidence="1">
    <location>
        <position position="175"/>
    </location>
    <ligand>
        <name>NAD(+)</name>
        <dbReference type="ChEBI" id="CHEBI:57540"/>
    </ligand>
</feature>
<feature type="binding site" evidence="1">
    <location>
        <position position="195"/>
    </location>
    <ligand>
        <name>NAD(+)</name>
        <dbReference type="ChEBI" id="CHEBI:57540"/>
    </ligand>
</feature>
<feature type="binding site" evidence="1">
    <location>
        <position position="200"/>
    </location>
    <ligand>
        <name>NAD(+)</name>
        <dbReference type="ChEBI" id="CHEBI:57540"/>
    </ligand>
</feature>
<feature type="binding site" evidence="1">
    <location>
        <begin position="262"/>
        <end position="264"/>
    </location>
    <ligand>
        <name>NAD(+)</name>
        <dbReference type="ChEBI" id="CHEBI:57540"/>
    </ligand>
</feature>
<feature type="binding site" evidence="1">
    <location>
        <begin position="286"/>
        <end position="287"/>
    </location>
    <ligand>
        <name>NAD(+)</name>
        <dbReference type="ChEBI" id="CHEBI:57540"/>
    </ligand>
</feature>
<feature type="site" description="Important for catalytic activity for the proton relay mechanism but does not participate directly in the coordination of zinc atom" evidence="1">
    <location>
        <position position="148"/>
    </location>
</feature>
<accession>A9NA21</accession>